<name>RL4_AQUAE</name>
<sequence length="199" mass="22618">MKIGDVEVRDDVFNVKVKKHVLWEVVKWQLAKRRQGTHSTKTRGEVAYSGRKILPQKGTGNARHGERGVNIFVGGGVAHGPKPRDYEYPLPKRVRKLGLKMALSDKARNNAIIFVDNIDLGKKPKTKKAIEFLKNLGVEKEKVLVVIPEKADVLYKSFRNLPNVRVLLPEGLNVYDVLWANKLVIQKDCLDRIYKKVEA</sequence>
<feature type="chain" id="PRO_0000129177" description="Large ribosomal subunit protein uL4">
    <location>
        <begin position="1"/>
        <end position="199"/>
    </location>
</feature>
<evidence type="ECO:0000255" key="1">
    <source>
        <dbReference type="HAMAP-Rule" id="MF_01328"/>
    </source>
</evidence>
<evidence type="ECO:0000305" key="2"/>
<gene>
    <name evidence="1" type="primary">rplD</name>
    <name type="ordered locus">aq_011</name>
</gene>
<dbReference type="EMBL" id="AE000657">
    <property type="protein sequence ID" value="AAC06394.1"/>
    <property type="molecule type" value="Genomic_DNA"/>
</dbReference>
<dbReference type="PIR" id="E70300">
    <property type="entry name" value="E70300"/>
</dbReference>
<dbReference type="RefSeq" id="NP_212990.1">
    <property type="nucleotide sequence ID" value="NC_000918.1"/>
</dbReference>
<dbReference type="RefSeq" id="WP_010879928.1">
    <property type="nucleotide sequence ID" value="NC_000918.1"/>
</dbReference>
<dbReference type="SMR" id="O66432"/>
<dbReference type="FunCoup" id="O66432">
    <property type="interactions" value="524"/>
</dbReference>
<dbReference type="STRING" id="224324.aq_011"/>
<dbReference type="EnsemblBacteria" id="AAC06394">
    <property type="protein sequence ID" value="AAC06394"/>
    <property type="gene ID" value="aq_011"/>
</dbReference>
<dbReference type="KEGG" id="aae:aq_011"/>
<dbReference type="PATRIC" id="fig|224324.8.peg.5"/>
<dbReference type="eggNOG" id="COG0088">
    <property type="taxonomic scope" value="Bacteria"/>
</dbReference>
<dbReference type="HOGENOM" id="CLU_041575_5_1_0"/>
<dbReference type="InParanoid" id="O66432"/>
<dbReference type="OrthoDB" id="9803201at2"/>
<dbReference type="Proteomes" id="UP000000798">
    <property type="component" value="Chromosome"/>
</dbReference>
<dbReference type="GO" id="GO:1990904">
    <property type="term" value="C:ribonucleoprotein complex"/>
    <property type="evidence" value="ECO:0007669"/>
    <property type="project" value="UniProtKB-KW"/>
</dbReference>
<dbReference type="GO" id="GO:0005840">
    <property type="term" value="C:ribosome"/>
    <property type="evidence" value="ECO:0007669"/>
    <property type="project" value="UniProtKB-KW"/>
</dbReference>
<dbReference type="GO" id="GO:0019843">
    <property type="term" value="F:rRNA binding"/>
    <property type="evidence" value="ECO:0007669"/>
    <property type="project" value="UniProtKB-UniRule"/>
</dbReference>
<dbReference type="GO" id="GO:0003735">
    <property type="term" value="F:structural constituent of ribosome"/>
    <property type="evidence" value="ECO:0000318"/>
    <property type="project" value="GO_Central"/>
</dbReference>
<dbReference type="GO" id="GO:0006412">
    <property type="term" value="P:translation"/>
    <property type="evidence" value="ECO:0007669"/>
    <property type="project" value="UniProtKB-UniRule"/>
</dbReference>
<dbReference type="FunFam" id="3.40.1370.10:FF:000004">
    <property type="entry name" value="50S ribosomal protein L4"/>
    <property type="match status" value="1"/>
</dbReference>
<dbReference type="Gene3D" id="3.40.1370.10">
    <property type="match status" value="1"/>
</dbReference>
<dbReference type="HAMAP" id="MF_01328_B">
    <property type="entry name" value="Ribosomal_uL4_B"/>
    <property type="match status" value="1"/>
</dbReference>
<dbReference type="InterPro" id="IPR002136">
    <property type="entry name" value="Ribosomal_uL4"/>
</dbReference>
<dbReference type="InterPro" id="IPR013005">
    <property type="entry name" value="Ribosomal_uL4-like"/>
</dbReference>
<dbReference type="InterPro" id="IPR023574">
    <property type="entry name" value="Ribosomal_uL4_dom_sf"/>
</dbReference>
<dbReference type="NCBIfam" id="TIGR03953">
    <property type="entry name" value="rplD_bact"/>
    <property type="match status" value="1"/>
</dbReference>
<dbReference type="PANTHER" id="PTHR10746">
    <property type="entry name" value="50S RIBOSOMAL PROTEIN L4"/>
    <property type="match status" value="1"/>
</dbReference>
<dbReference type="PANTHER" id="PTHR10746:SF6">
    <property type="entry name" value="LARGE RIBOSOMAL SUBUNIT PROTEIN UL4M"/>
    <property type="match status" value="1"/>
</dbReference>
<dbReference type="Pfam" id="PF00573">
    <property type="entry name" value="Ribosomal_L4"/>
    <property type="match status" value="1"/>
</dbReference>
<dbReference type="SUPFAM" id="SSF52166">
    <property type="entry name" value="Ribosomal protein L4"/>
    <property type="match status" value="1"/>
</dbReference>
<accession>O66432</accession>
<protein>
    <recommendedName>
        <fullName evidence="1">Large ribosomal subunit protein uL4</fullName>
    </recommendedName>
    <alternativeName>
        <fullName evidence="2">50S ribosomal protein L4</fullName>
    </alternativeName>
</protein>
<comment type="function">
    <text evidence="1">One of the primary rRNA binding proteins, this protein initially binds near the 5'-end of the 23S rRNA. It is important during the early stages of 50S assembly. It makes multiple contacts with different domains of the 23S rRNA in the assembled 50S subunit and ribosome.</text>
</comment>
<comment type="function">
    <text evidence="1">Forms part of the polypeptide exit tunnel.</text>
</comment>
<comment type="subunit">
    <text evidence="1">Part of the 50S ribosomal subunit.</text>
</comment>
<comment type="similarity">
    <text evidence="1">Belongs to the universal ribosomal protein uL4 family.</text>
</comment>
<proteinExistence type="inferred from homology"/>
<keyword id="KW-1185">Reference proteome</keyword>
<keyword id="KW-0687">Ribonucleoprotein</keyword>
<keyword id="KW-0689">Ribosomal protein</keyword>
<keyword id="KW-0694">RNA-binding</keyword>
<keyword id="KW-0699">rRNA-binding</keyword>
<reference key="1">
    <citation type="journal article" date="1998" name="Nature">
        <title>The complete genome of the hyperthermophilic bacterium Aquifex aeolicus.</title>
        <authorList>
            <person name="Deckert G."/>
            <person name="Warren P.V."/>
            <person name="Gaasterland T."/>
            <person name="Young W.G."/>
            <person name="Lenox A.L."/>
            <person name="Graham D.E."/>
            <person name="Overbeek R."/>
            <person name="Snead M.A."/>
            <person name="Keller M."/>
            <person name="Aujay M."/>
            <person name="Huber R."/>
            <person name="Feldman R.A."/>
            <person name="Short J.M."/>
            <person name="Olsen G.J."/>
            <person name="Swanson R.V."/>
        </authorList>
    </citation>
    <scope>NUCLEOTIDE SEQUENCE [LARGE SCALE GENOMIC DNA]</scope>
    <source>
        <strain>VF5</strain>
    </source>
</reference>
<organism>
    <name type="scientific">Aquifex aeolicus (strain VF5)</name>
    <dbReference type="NCBI Taxonomy" id="224324"/>
    <lineage>
        <taxon>Bacteria</taxon>
        <taxon>Pseudomonadati</taxon>
        <taxon>Aquificota</taxon>
        <taxon>Aquificia</taxon>
        <taxon>Aquificales</taxon>
        <taxon>Aquificaceae</taxon>
        <taxon>Aquifex</taxon>
    </lineage>
</organism>